<comment type="function">
    <text evidence="1">Might take part in the signal recognition particle (SRP) pathway. This is inferred from the conservation of its genetic proximity to ftsY/ffh. May be a regulatory protein.</text>
</comment>
<comment type="similarity">
    <text evidence="1">Belongs to the UPF0122 family.</text>
</comment>
<proteinExistence type="inferred from homology"/>
<protein>
    <recommendedName>
        <fullName evidence="1">UPF0122 protein SPT_0939</fullName>
    </recommendedName>
</protein>
<name>Y939_STRZT</name>
<organism>
    <name type="scientific">Streptococcus pneumoniae (strain Taiwan19F-14)</name>
    <dbReference type="NCBI Taxonomy" id="487213"/>
    <lineage>
        <taxon>Bacteria</taxon>
        <taxon>Bacillati</taxon>
        <taxon>Bacillota</taxon>
        <taxon>Bacilli</taxon>
        <taxon>Lactobacillales</taxon>
        <taxon>Streptococcaceae</taxon>
        <taxon>Streptococcus</taxon>
    </lineage>
</organism>
<sequence>MEIEKTNRMNALFEFYAALLTDKQMNYIELYYADDYSLAEIAEEFGVSRQAVYDNIKRTEKILEDYEMKLHMYSDYIVRSQIFDQILERYPKDNFLQEQIEILTSIDNRE</sequence>
<evidence type="ECO:0000255" key="1">
    <source>
        <dbReference type="HAMAP-Rule" id="MF_00245"/>
    </source>
</evidence>
<accession>C1CR18</accession>
<reference key="1">
    <citation type="journal article" date="2010" name="Genome Biol.">
        <title>Structure and dynamics of the pan-genome of Streptococcus pneumoniae and closely related species.</title>
        <authorList>
            <person name="Donati C."/>
            <person name="Hiller N.L."/>
            <person name="Tettelin H."/>
            <person name="Muzzi A."/>
            <person name="Croucher N.J."/>
            <person name="Angiuoli S.V."/>
            <person name="Oggioni M."/>
            <person name="Dunning Hotopp J.C."/>
            <person name="Hu F.Z."/>
            <person name="Riley D.R."/>
            <person name="Covacci A."/>
            <person name="Mitchell T.J."/>
            <person name="Bentley S.D."/>
            <person name="Kilian M."/>
            <person name="Ehrlich G.D."/>
            <person name="Rappuoli R."/>
            <person name="Moxon E.R."/>
            <person name="Masignani V."/>
        </authorList>
    </citation>
    <scope>NUCLEOTIDE SEQUENCE [LARGE SCALE GENOMIC DNA]</scope>
    <source>
        <strain>Taiwan19F-14</strain>
    </source>
</reference>
<gene>
    <name type="ordered locus">SPT_0939</name>
</gene>
<feature type="chain" id="PRO_1000197597" description="UPF0122 protein SPT_0939">
    <location>
        <begin position="1"/>
        <end position="110"/>
    </location>
</feature>
<dbReference type="EMBL" id="CP000921">
    <property type="protein sequence ID" value="ACO23676.1"/>
    <property type="molecule type" value="Genomic_DNA"/>
</dbReference>
<dbReference type="RefSeq" id="WP_000402071.1">
    <property type="nucleotide sequence ID" value="NC_012469.1"/>
</dbReference>
<dbReference type="SMR" id="C1CR18"/>
<dbReference type="KEGG" id="snt:SPT_0939"/>
<dbReference type="HOGENOM" id="CLU_129218_1_0_9"/>
<dbReference type="Gene3D" id="1.10.10.10">
    <property type="entry name" value="Winged helix-like DNA-binding domain superfamily/Winged helix DNA-binding domain"/>
    <property type="match status" value="1"/>
</dbReference>
<dbReference type="HAMAP" id="MF_00245">
    <property type="entry name" value="UPF0122"/>
    <property type="match status" value="1"/>
</dbReference>
<dbReference type="InterPro" id="IPR013324">
    <property type="entry name" value="RNA_pol_sigma_r3/r4-like"/>
</dbReference>
<dbReference type="InterPro" id="IPR007394">
    <property type="entry name" value="UPF0122"/>
</dbReference>
<dbReference type="InterPro" id="IPR054831">
    <property type="entry name" value="UPF0122_fam_protein"/>
</dbReference>
<dbReference type="InterPro" id="IPR036388">
    <property type="entry name" value="WH-like_DNA-bd_sf"/>
</dbReference>
<dbReference type="NCBIfam" id="NF001066">
    <property type="entry name" value="PRK00118.1-1"/>
    <property type="match status" value="1"/>
</dbReference>
<dbReference type="NCBIfam" id="NF001068">
    <property type="entry name" value="PRK00118.1-4"/>
    <property type="match status" value="1"/>
</dbReference>
<dbReference type="NCBIfam" id="NF001070">
    <property type="entry name" value="PRK00118.1-6"/>
    <property type="match status" value="1"/>
</dbReference>
<dbReference type="NCBIfam" id="NF045758">
    <property type="entry name" value="YlxM"/>
    <property type="match status" value="1"/>
</dbReference>
<dbReference type="PANTHER" id="PTHR40083">
    <property type="entry name" value="UPF0122 PROTEIN CBO2450/CLC_2298"/>
    <property type="match status" value="1"/>
</dbReference>
<dbReference type="PANTHER" id="PTHR40083:SF1">
    <property type="entry name" value="UPF0122 PROTEIN YLXM"/>
    <property type="match status" value="1"/>
</dbReference>
<dbReference type="Pfam" id="PF04297">
    <property type="entry name" value="UPF0122"/>
    <property type="match status" value="1"/>
</dbReference>
<dbReference type="SUPFAM" id="SSF88659">
    <property type="entry name" value="Sigma3 and sigma4 domains of RNA polymerase sigma factors"/>
    <property type="match status" value="1"/>
</dbReference>